<accession>Q9FIH4</accession>
<keyword id="KW-1185">Reference proteome</keyword>
<feature type="chain" id="PRO_0000283546" description="Putative F-box protein At5g42430">
    <location>
        <begin position="1"/>
        <end position="395"/>
    </location>
</feature>
<feature type="domain" description="F-box">
    <location>
        <begin position="4"/>
        <end position="53"/>
    </location>
</feature>
<name>FB280_ARATH</name>
<reference key="1">
    <citation type="journal article" date="1998" name="DNA Res.">
        <title>Structural analysis of Arabidopsis thaliana chromosome 5. VIII. Sequence features of the regions of 1,081,958 bp covered by seventeen physically assigned P1 and TAC clones.</title>
        <authorList>
            <person name="Asamizu E."/>
            <person name="Sato S."/>
            <person name="Kaneko T."/>
            <person name="Nakamura Y."/>
            <person name="Kotani H."/>
            <person name="Miyajima N."/>
            <person name="Tabata S."/>
        </authorList>
    </citation>
    <scope>NUCLEOTIDE SEQUENCE [LARGE SCALE GENOMIC DNA]</scope>
    <source>
        <strain>cv. Columbia</strain>
    </source>
</reference>
<reference key="2">
    <citation type="journal article" date="2017" name="Plant J.">
        <title>Araport11: a complete reannotation of the Arabidopsis thaliana reference genome.</title>
        <authorList>
            <person name="Cheng C.Y."/>
            <person name="Krishnakumar V."/>
            <person name="Chan A.P."/>
            <person name="Thibaud-Nissen F."/>
            <person name="Schobel S."/>
            <person name="Town C.D."/>
        </authorList>
    </citation>
    <scope>GENOME REANNOTATION</scope>
    <source>
        <strain>cv. Columbia</strain>
    </source>
</reference>
<gene>
    <name type="ordered locus">At5g42430</name>
    <name type="ORF">MDH9.12</name>
</gene>
<organism>
    <name type="scientific">Arabidopsis thaliana</name>
    <name type="common">Mouse-ear cress</name>
    <dbReference type="NCBI Taxonomy" id="3702"/>
    <lineage>
        <taxon>Eukaryota</taxon>
        <taxon>Viridiplantae</taxon>
        <taxon>Streptophyta</taxon>
        <taxon>Embryophyta</taxon>
        <taxon>Tracheophyta</taxon>
        <taxon>Spermatophyta</taxon>
        <taxon>Magnoliopsida</taxon>
        <taxon>eudicotyledons</taxon>
        <taxon>Gunneridae</taxon>
        <taxon>Pentapetalae</taxon>
        <taxon>rosids</taxon>
        <taxon>malvids</taxon>
        <taxon>Brassicales</taxon>
        <taxon>Brassicaceae</taxon>
        <taxon>Camelineae</taxon>
        <taxon>Arabidopsis</taxon>
    </lineage>
</organism>
<dbReference type="EMBL" id="AB016888">
    <property type="protein sequence ID" value="BAB10484.1"/>
    <property type="molecule type" value="Genomic_DNA"/>
</dbReference>
<dbReference type="EMBL" id="CP002688">
    <property type="protein sequence ID" value="AED94810.1"/>
    <property type="molecule type" value="Genomic_DNA"/>
</dbReference>
<dbReference type="RefSeq" id="NP_199058.1">
    <property type="nucleotide sequence ID" value="NM_123608.1"/>
</dbReference>
<dbReference type="SMR" id="Q9FIH4"/>
<dbReference type="BioGRID" id="19499">
    <property type="interactions" value="2"/>
</dbReference>
<dbReference type="FunCoup" id="Q9FIH4">
    <property type="interactions" value="36"/>
</dbReference>
<dbReference type="PaxDb" id="3702-AT5G42430.1"/>
<dbReference type="EnsemblPlants" id="AT5G42430.1">
    <property type="protein sequence ID" value="AT5G42430.1"/>
    <property type="gene ID" value="AT5G42430"/>
</dbReference>
<dbReference type="GeneID" id="834249"/>
<dbReference type="Gramene" id="AT5G42430.1">
    <property type="protein sequence ID" value="AT5G42430.1"/>
    <property type="gene ID" value="AT5G42430"/>
</dbReference>
<dbReference type="KEGG" id="ath:AT5G42430"/>
<dbReference type="Araport" id="AT5G42430"/>
<dbReference type="TAIR" id="AT5G42430"/>
<dbReference type="eggNOG" id="ENOG502SNHU">
    <property type="taxonomic scope" value="Eukaryota"/>
</dbReference>
<dbReference type="HOGENOM" id="CLU_027176_8_1_1"/>
<dbReference type="InParanoid" id="Q9FIH4"/>
<dbReference type="OMA" id="YLCSNER"/>
<dbReference type="PhylomeDB" id="Q9FIH4"/>
<dbReference type="PRO" id="PR:Q9FIH4"/>
<dbReference type="Proteomes" id="UP000006548">
    <property type="component" value="Chromosome 5"/>
</dbReference>
<dbReference type="ExpressionAtlas" id="Q9FIH4">
    <property type="expression patterns" value="baseline"/>
</dbReference>
<dbReference type="CDD" id="cd22157">
    <property type="entry name" value="F-box_AtFBW1-like"/>
    <property type="match status" value="1"/>
</dbReference>
<dbReference type="Gene3D" id="1.20.1280.50">
    <property type="match status" value="1"/>
</dbReference>
<dbReference type="InterPro" id="IPR013187">
    <property type="entry name" value="F-box-assoc_dom_typ3"/>
</dbReference>
<dbReference type="InterPro" id="IPR017451">
    <property type="entry name" value="F-box-assoc_interact_dom"/>
</dbReference>
<dbReference type="InterPro" id="IPR036047">
    <property type="entry name" value="F-box-like_dom_sf"/>
</dbReference>
<dbReference type="InterPro" id="IPR001810">
    <property type="entry name" value="F-box_dom"/>
</dbReference>
<dbReference type="NCBIfam" id="TIGR01640">
    <property type="entry name" value="F_box_assoc_1"/>
    <property type="match status" value="1"/>
</dbReference>
<dbReference type="PANTHER" id="PTHR31111">
    <property type="entry name" value="BNAA05G37150D PROTEIN-RELATED"/>
    <property type="match status" value="1"/>
</dbReference>
<dbReference type="PANTHER" id="PTHR31111:SF130">
    <property type="entry name" value="F-BOX ASSOCIATED UBIQUITINATION EFFECTOR FAMILY PROTEIN"/>
    <property type="match status" value="1"/>
</dbReference>
<dbReference type="Pfam" id="PF00646">
    <property type="entry name" value="F-box"/>
    <property type="match status" value="1"/>
</dbReference>
<dbReference type="Pfam" id="PF08268">
    <property type="entry name" value="FBA_3"/>
    <property type="match status" value="1"/>
</dbReference>
<dbReference type="SMART" id="SM00256">
    <property type="entry name" value="FBOX"/>
    <property type="match status" value="1"/>
</dbReference>
<dbReference type="SUPFAM" id="SSF81383">
    <property type="entry name" value="F-box domain"/>
    <property type="match status" value="1"/>
</dbReference>
<protein>
    <recommendedName>
        <fullName>Putative F-box protein At5g42430</fullName>
    </recommendedName>
</protein>
<proteinExistence type="predicted"/>
<sequence length="395" mass="45732">MNGEENSDSIPIDLILEILSRLPAKSITRFHCVSKLWGSMLCRPYFNELFLTISSARPRLLFAFSKHGEWRFFSSPQPQNPYGKSSFVATADFHTKFSQNLNICNYTSGLVYFSAMWITKADVICNPSTGHYAMLPKLLLTYGETRSFFLFDPVGKQFKVLLMNKINNNETKDIHILTLGTRKVRWRKIQQCPLIHIVSHEWICINGALYYIAYNIDDFLGYIVCFDVRSEKFKCLNLNQDCFSERSTKLIYYKGKLGVVNLKYAHGGGFPLKLCMWVLEDVEKQEWTTSVYTLRDEDRVVKVYYDLFIVGITATGEIVLAKKKVCKPFYVFYFNLERNTLLSVEIQGFGEYQSCCSVHAFVDHVEDLNVYAFVEHMKKTYEYDATSISPSEQKL</sequence>